<feature type="chain" id="PRO_1000022492" description="Chorismate synthase">
    <location>
        <begin position="1"/>
        <end position="352"/>
    </location>
</feature>
<feature type="binding site" evidence="1">
    <location>
        <position position="48"/>
    </location>
    <ligand>
        <name>NADP(+)</name>
        <dbReference type="ChEBI" id="CHEBI:58349"/>
    </ligand>
</feature>
<feature type="binding site" evidence="1">
    <location>
        <begin position="125"/>
        <end position="127"/>
    </location>
    <ligand>
        <name>FMN</name>
        <dbReference type="ChEBI" id="CHEBI:58210"/>
    </ligand>
</feature>
<feature type="binding site" evidence="1">
    <location>
        <begin position="237"/>
        <end position="238"/>
    </location>
    <ligand>
        <name>FMN</name>
        <dbReference type="ChEBI" id="CHEBI:58210"/>
    </ligand>
</feature>
<feature type="binding site" evidence="1">
    <location>
        <position position="278"/>
    </location>
    <ligand>
        <name>FMN</name>
        <dbReference type="ChEBI" id="CHEBI:58210"/>
    </ligand>
</feature>
<feature type="binding site" evidence="1">
    <location>
        <begin position="293"/>
        <end position="297"/>
    </location>
    <ligand>
        <name>FMN</name>
        <dbReference type="ChEBI" id="CHEBI:58210"/>
    </ligand>
</feature>
<feature type="binding site" evidence="1">
    <location>
        <position position="319"/>
    </location>
    <ligand>
        <name>FMN</name>
        <dbReference type="ChEBI" id="CHEBI:58210"/>
    </ligand>
</feature>
<protein>
    <recommendedName>
        <fullName evidence="1">Chorismate synthase</fullName>
        <shortName evidence="1">CS</shortName>
        <ecNumber evidence="1">4.2.3.5</ecNumber>
    </recommendedName>
    <alternativeName>
        <fullName evidence="1">5-enolpyruvylshikimate-3-phosphate phospholyase</fullName>
    </alternativeName>
</protein>
<name>AROC_FRATW</name>
<evidence type="ECO:0000255" key="1">
    <source>
        <dbReference type="HAMAP-Rule" id="MF_00300"/>
    </source>
</evidence>
<gene>
    <name evidence="1" type="primary">aroC</name>
    <name type="ordered locus">FTW_1304</name>
</gene>
<reference key="1">
    <citation type="journal article" date="2007" name="PLoS ONE">
        <title>Complete genomic characterization of a pathogenic A.II strain of Francisella tularensis subspecies tularensis.</title>
        <authorList>
            <person name="Beckstrom-Sternberg S.M."/>
            <person name="Auerbach R.K."/>
            <person name="Godbole S."/>
            <person name="Pearson J.V."/>
            <person name="Beckstrom-Sternberg J.S."/>
            <person name="Deng Z."/>
            <person name="Munk C."/>
            <person name="Kubota K."/>
            <person name="Zhou Y."/>
            <person name="Bruce D."/>
            <person name="Noronha J."/>
            <person name="Scheuermann R.H."/>
            <person name="Wang A."/>
            <person name="Wei X."/>
            <person name="Wang J."/>
            <person name="Hao J."/>
            <person name="Wagner D.M."/>
            <person name="Brettin T.S."/>
            <person name="Brown N."/>
            <person name="Gilna P."/>
            <person name="Keim P.S."/>
        </authorList>
    </citation>
    <scope>NUCLEOTIDE SEQUENCE [LARGE SCALE GENOMIC DNA]</scope>
    <source>
        <strain>WY96-3418</strain>
    </source>
</reference>
<sequence length="352" mass="38020">MSGNTFGKIFTVTTCGESHGDSLAAIIDGCPSNIPLCEADIQLELDRRKPGQSKFTTQRKEPDEVKIISGVFEGKTTGTPIGLIIKNQDQKSKDYSEIKDKFRPGHADYTYFKKYGIRDYRGGGRSSARETAMRVAAGAIAKKILKHYGIEIYGFCSQIGSLKIDFIDKDFINQNPFFIANKNAVPACEDLIHSIRKQGDSIGAEVTVVATGLEAGLGRPVFDRLDASIAYAMMSINAVKAVSIGDGFDCVAQKGSQHRDEITQQQGFLSNHAGGILGGISTGQDIIAKLAFKPTSSILQPGKSIDVQGNDTTVITKGRHDPCVGIRGVPIAEAMLALVLVDELLITRSYRD</sequence>
<keyword id="KW-0028">Amino-acid biosynthesis</keyword>
<keyword id="KW-0057">Aromatic amino acid biosynthesis</keyword>
<keyword id="KW-0274">FAD</keyword>
<keyword id="KW-0285">Flavoprotein</keyword>
<keyword id="KW-0288">FMN</keyword>
<keyword id="KW-0456">Lyase</keyword>
<keyword id="KW-0521">NADP</keyword>
<proteinExistence type="inferred from homology"/>
<organism>
    <name type="scientific">Francisella tularensis subsp. tularensis (strain WY96-3418)</name>
    <dbReference type="NCBI Taxonomy" id="418136"/>
    <lineage>
        <taxon>Bacteria</taxon>
        <taxon>Pseudomonadati</taxon>
        <taxon>Pseudomonadota</taxon>
        <taxon>Gammaproteobacteria</taxon>
        <taxon>Thiotrichales</taxon>
        <taxon>Francisellaceae</taxon>
        <taxon>Francisella</taxon>
    </lineage>
</organism>
<accession>A4IYS7</accession>
<comment type="function">
    <text evidence="1">Catalyzes the anti-1,4-elimination of the C-3 phosphate and the C-6 proR hydrogen from 5-enolpyruvylshikimate-3-phosphate (EPSP) to yield chorismate, which is the branch point compound that serves as the starting substrate for the three terminal pathways of aromatic amino acid biosynthesis. This reaction introduces a second double bond into the aromatic ring system.</text>
</comment>
<comment type="catalytic activity">
    <reaction evidence="1">
        <text>5-O-(1-carboxyvinyl)-3-phosphoshikimate = chorismate + phosphate</text>
        <dbReference type="Rhea" id="RHEA:21020"/>
        <dbReference type="ChEBI" id="CHEBI:29748"/>
        <dbReference type="ChEBI" id="CHEBI:43474"/>
        <dbReference type="ChEBI" id="CHEBI:57701"/>
        <dbReference type="EC" id="4.2.3.5"/>
    </reaction>
</comment>
<comment type="cofactor">
    <cofactor evidence="1">
        <name>FMNH2</name>
        <dbReference type="ChEBI" id="CHEBI:57618"/>
    </cofactor>
    <text evidence="1">Reduced FMN (FMNH(2)).</text>
</comment>
<comment type="pathway">
    <text evidence="1">Metabolic intermediate biosynthesis; chorismate biosynthesis; chorismate from D-erythrose 4-phosphate and phosphoenolpyruvate: step 7/7.</text>
</comment>
<comment type="subunit">
    <text evidence="1">Homotetramer.</text>
</comment>
<comment type="similarity">
    <text evidence="1">Belongs to the chorismate synthase family.</text>
</comment>
<dbReference type="EC" id="4.2.3.5" evidence="1"/>
<dbReference type="EMBL" id="CP000608">
    <property type="protein sequence ID" value="ABO47078.1"/>
    <property type="molecule type" value="Genomic_DNA"/>
</dbReference>
<dbReference type="RefSeq" id="WP_003020861.1">
    <property type="nucleotide sequence ID" value="NC_009257.1"/>
</dbReference>
<dbReference type="SMR" id="A4IYS7"/>
<dbReference type="KEGG" id="ftw:FTW_1304"/>
<dbReference type="HOGENOM" id="CLU_034547_0_2_6"/>
<dbReference type="UniPathway" id="UPA00053">
    <property type="reaction ID" value="UER00090"/>
</dbReference>
<dbReference type="GO" id="GO:0005829">
    <property type="term" value="C:cytosol"/>
    <property type="evidence" value="ECO:0007669"/>
    <property type="project" value="TreeGrafter"/>
</dbReference>
<dbReference type="GO" id="GO:0004107">
    <property type="term" value="F:chorismate synthase activity"/>
    <property type="evidence" value="ECO:0007669"/>
    <property type="project" value="UniProtKB-UniRule"/>
</dbReference>
<dbReference type="GO" id="GO:0010181">
    <property type="term" value="F:FMN binding"/>
    <property type="evidence" value="ECO:0007669"/>
    <property type="project" value="TreeGrafter"/>
</dbReference>
<dbReference type="GO" id="GO:0008652">
    <property type="term" value="P:amino acid biosynthetic process"/>
    <property type="evidence" value="ECO:0007669"/>
    <property type="project" value="UniProtKB-KW"/>
</dbReference>
<dbReference type="GO" id="GO:0009073">
    <property type="term" value="P:aromatic amino acid family biosynthetic process"/>
    <property type="evidence" value="ECO:0007669"/>
    <property type="project" value="UniProtKB-KW"/>
</dbReference>
<dbReference type="GO" id="GO:0009423">
    <property type="term" value="P:chorismate biosynthetic process"/>
    <property type="evidence" value="ECO:0007669"/>
    <property type="project" value="UniProtKB-UniRule"/>
</dbReference>
<dbReference type="CDD" id="cd07304">
    <property type="entry name" value="Chorismate_synthase"/>
    <property type="match status" value="1"/>
</dbReference>
<dbReference type="Gene3D" id="3.60.150.10">
    <property type="entry name" value="Chorismate synthase AroC"/>
    <property type="match status" value="1"/>
</dbReference>
<dbReference type="HAMAP" id="MF_00300">
    <property type="entry name" value="Chorismate_synth"/>
    <property type="match status" value="1"/>
</dbReference>
<dbReference type="InterPro" id="IPR000453">
    <property type="entry name" value="Chorismate_synth"/>
</dbReference>
<dbReference type="InterPro" id="IPR035904">
    <property type="entry name" value="Chorismate_synth_AroC_sf"/>
</dbReference>
<dbReference type="InterPro" id="IPR020541">
    <property type="entry name" value="Chorismate_synthase_CS"/>
</dbReference>
<dbReference type="NCBIfam" id="TIGR00033">
    <property type="entry name" value="aroC"/>
    <property type="match status" value="1"/>
</dbReference>
<dbReference type="NCBIfam" id="NF003793">
    <property type="entry name" value="PRK05382.1"/>
    <property type="match status" value="1"/>
</dbReference>
<dbReference type="PANTHER" id="PTHR21085">
    <property type="entry name" value="CHORISMATE SYNTHASE"/>
    <property type="match status" value="1"/>
</dbReference>
<dbReference type="PANTHER" id="PTHR21085:SF0">
    <property type="entry name" value="CHORISMATE SYNTHASE"/>
    <property type="match status" value="1"/>
</dbReference>
<dbReference type="Pfam" id="PF01264">
    <property type="entry name" value="Chorismate_synt"/>
    <property type="match status" value="1"/>
</dbReference>
<dbReference type="PIRSF" id="PIRSF001456">
    <property type="entry name" value="Chorismate_synth"/>
    <property type="match status" value="1"/>
</dbReference>
<dbReference type="SUPFAM" id="SSF103263">
    <property type="entry name" value="Chorismate synthase, AroC"/>
    <property type="match status" value="1"/>
</dbReference>
<dbReference type="PROSITE" id="PS00787">
    <property type="entry name" value="CHORISMATE_SYNTHASE_1"/>
    <property type="match status" value="1"/>
</dbReference>
<dbReference type="PROSITE" id="PS00788">
    <property type="entry name" value="CHORISMATE_SYNTHASE_2"/>
    <property type="match status" value="1"/>
</dbReference>
<dbReference type="PROSITE" id="PS00789">
    <property type="entry name" value="CHORISMATE_SYNTHASE_3"/>
    <property type="match status" value="1"/>
</dbReference>